<gene>
    <name type="primary">hup</name>
    <name type="ordered locus">CJE0991</name>
</gene>
<sequence length="98" mass="10274">MTKADFISLVAQTAGLTKKDATTATDAVISTITDVLAKGDSISFIGFGTFSTQERAAREARVPSTGKTIKVPATRVAKFKVGKNLKEAVAKASGKKKK</sequence>
<proteinExistence type="inferred from homology"/>
<evidence type="ECO:0000250" key="1"/>
<evidence type="ECO:0000305" key="2"/>
<organism>
    <name type="scientific">Campylobacter jejuni (strain RM1221)</name>
    <dbReference type="NCBI Taxonomy" id="195099"/>
    <lineage>
        <taxon>Bacteria</taxon>
        <taxon>Pseudomonadati</taxon>
        <taxon>Campylobacterota</taxon>
        <taxon>Epsilonproteobacteria</taxon>
        <taxon>Campylobacterales</taxon>
        <taxon>Campylobacteraceae</taxon>
        <taxon>Campylobacter</taxon>
    </lineage>
</organism>
<accession>Q5HUP6</accession>
<accession>Q3MLK5</accession>
<comment type="function">
    <text evidence="1">Histone-like DNA-binding protein which is capable of wrapping DNA to stabilize it, and thus to prevent its denaturation under extreme environmental conditions.</text>
</comment>
<comment type="subunit">
    <text evidence="1">Homodimer.</text>
</comment>
<comment type="similarity">
    <text evidence="2">Belongs to the bacterial histone-like protein family.</text>
</comment>
<name>DBH_CAMJR</name>
<feature type="chain" id="PRO_0000291774" description="DNA-binding protein HU">
    <location>
        <begin position="1"/>
        <end position="98"/>
    </location>
</feature>
<protein>
    <recommendedName>
        <fullName>DNA-binding protein HU</fullName>
    </recommendedName>
</protein>
<keyword id="KW-0226">DNA condensation</keyword>
<keyword id="KW-0238">DNA-binding</keyword>
<dbReference type="EMBL" id="AY751947">
    <property type="protein sequence ID" value="AAW83337.1"/>
    <property type="molecule type" value="Genomic_DNA"/>
</dbReference>
<dbReference type="EMBL" id="CP000025">
    <property type="protein sequence ID" value="AAW35324.1"/>
    <property type="molecule type" value="Genomic_DNA"/>
</dbReference>
<dbReference type="RefSeq" id="WP_002859562.1">
    <property type="nucleotide sequence ID" value="NC_003912.7"/>
</dbReference>
<dbReference type="SMR" id="Q5HUP6"/>
<dbReference type="KEGG" id="cjr:CJE0991"/>
<dbReference type="HOGENOM" id="CLU_105066_3_2_7"/>
<dbReference type="GO" id="GO:0005829">
    <property type="term" value="C:cytosol"/>
    <property type="evidence" value="ECO:0007669"/>
    <property type="project" value="TreeGrafter"/>
</dbReference>
<dbReference type="GO" id="GO:0003677">
    <property type="term" value="F:DNA binding"/>
    <property type="evidence" value="ECO:0007669"/>
    <property type="project" value="UniProtKB-KW"/>
</dbReference>
<dbReference type="GO" id="GO:0030527">
    <property type="term" value="F:structural constituent of chromatin"/>
    <property type="evidence" value="ECO:0007669"/>
    <property type="project" value="InterPro"/>
</dbReference>
<dbReference type="GO" id="GO:0030261">
    <property type="term" value="P:chromosome condensation"/>
    <property type="evidence" value="ECO:0007669"/>
    <property type="project" value="UniProtKB-KW"/>
</dbReference>
<dbReference type="CDD" id="cd13831">
    <property type="entry name" value="HU"/>
    <property type="match status" value="1"/>
</dbReference>
<dbReference type="Gene3D" id="4.10.520.10">
    <property type="entry name" value="IHF-like DNA-binding proteins"/>
    <property type="match status" value="1"/>
</dbReference>
<dbReference type="InterPro" id="IPR000119">
    <property type="entry name" value="Hist_DNA-bd"/>
</dbReference>
<dbReference type="InterPro" id="IPR010992">
    <property type="entry name" value="IHF-like_DNA-bd_dom_sf"/>
</dbReference>
<dbReference type="PANTHER" id="PTHR33175">
    <property type="entry name" value="DNA-BINDING PROTEIN HU"/>
    <property type="match status" value="1"/>
</dbReference>
<dbReference type="PANTHER" id="PTHR33175:SF3">
    <property type="entry name" value="DNA-BINDING PROTEIN HU-BETA"/>
    <property type="match status" value="1"/>
</dbReference>
<dbReference type="Pfam" id="PF00216">
    <property type="entry name" value="Bac_DNA_binding"/>
    <property type="match status" value="1"/>
</dbReference>
<dbReference type="PRINTS" id="PR01727">
    <property type="entry name" value="DNABINDINGHU"/>
</dbReference>
<dbReference type="SMART" id="SM00411">
    <property type="entry name" value="BHL"/>
    <property type="match status" value="1"/>
</dbReference>
<dbReference type="SUPFAM" id="SSF47729">
    <property type="entry name" value="IHF-like DNA-binding proteins"/>
    <property type="match status" value="1"/>
</dbReference>
<reference key="1">
    <citation type="submission" date="2004-09" db="EMBL/GenBank/DDBJ databases">
        <title>Genomic and proteomic identification of a DNA-binding protein biomarker used in the discrimination of Campylobacter species and strains by MALDI-TOF-MS.</title>
        <authorList>
            <person name="Fagerquist C.K."/>
            <person name="Miller W.G."/>
            <person name="Harden L.A."/>
            <person name="Bates A.H."/>
            <person name="Vensel W.H."/>
            <person name="Wang G."/>
            <person name="Mandrell R.E."/>
        </authorList>
    </citation>
    <scope>NUCLEOTIDE SEQUENCE [GENOMIC DNA]</scope>
</reference>
<reference key="2">
    <citation type="journal article" date="2005" name="PLoS Biol.">
        <title>Major structural differences and novel potential virulence mechanisms from the genomes of multiple Campylobacter species.</title>
        <authorList>
            <person name="Fouts D.E."/>
            <person name="Mongodin E.F."/>
            <person name="Mandrell R.E."/>
            <person name="Miller W.G."/>
            <person name="Rasko D.A."/>
            <person name="Ravel J."/>
            <person name="Brinkac L.M."/>
            <person name="DeBoy R.T."/>
            <person name="Parker C.T."/>
            <person name="Daugherty S.C."/>
            <person name="Dodson R.J."/>
            <person name="Durkin A.S."/>
            <person name="Madupu R."/>
            <person name="Sullivan S.A."/>
            <person name="Shetty J.U."/>
            <person name="Ayodeji M.A."/>
            <person name="Shvartsbeyn A."/>
            <person name="Schatz M.C."/>
            <person name="Badger J.H."/>
            <person name="Fraser C.M."/>
            <person name="Nelson K.E."/>
        </authorList>
    </citation>
    <scope>NUCLEOTIDE SEQUENCE [LARGE SCALE GENOMIC DNA]</scope>
    <source>
        <strain>RM1221</strain>
    </source>
</reference>